<sequence>MNCVLTEARLVTMQPGVQGYQITEPQTLIIEQGRIQHIGQHIDLPSDAHPISCAGKLVTPGLIDCHTHLVYAGSRANEFELRLQGVPYQTIAAQGGGILSTVNATRKASEEALIELALPRLDGLLRSGVTSVEVKSGYGLTLKDELKMLRAAKALEQHRRVKITTTLLAAHALPPEFQGRSDDYIAHICQEIIPRVAEEQLATSVDVFCESIGFSVAQTERVFHAAQAHGLQIKGHTEQLSNLGGSALTARMGGLSVDHIEYLDEAGVKALAQSSTVATLLPGAFYFLRETQKPPIEWLRQYRVPMAISTDLNPGTSPFADLSLMMNMGCTLFDLTPEETLRAVTCHAAQALGYPANRGQIAEGYDADLAIWNIEHPAELSYQVGVSRLHARIVNGELSYES</sequence>
<proteinExistence type="inferred from homology"/>
<keyword id="KW-0963">Cytoplasm</keyword>
<keyword id="KW-0369">Histidine metabolism</keyword>
<keyword id="KW-0378">Hydrolase</keyword>
<keyword id="KW-0408">Iron</keyword>
<keyword id="KW-0479">Metal-binding</keyword>
<keyword id="KW-1185">Reference proteome</keyword>
<keyword id="KW-0862">Zinc</keyword>
<comment type="function">
    <text evidence="1">Catalyzes the hydrolytic cleavage of the carbon-nitrogen bond in imidazolone-5-propanoate to yield N-formimidoyl-L-glutamate. It is the third step in the universal histidine degradation pathway.</text>
</comment>
<comment type="catalytic activity">
    <reaction evidence="1">
        <text>4-imidazolone-5-propanoate + H2O = N-formimidoyl-L-glutamate</text>
        <dbReference type="Rhea" id="RHEA:23660"/>
        <dbReference type="ChEBI" id="CHEBI:15377"/>
        <dbReference type="ChEBI" id="CHEBI:58928"/>
        <dbReference type="ChEBI" id="CHEBI:77893"/>
        <dbReference type="EC" id="3.5.2.7"/>
    </reaction>
</comment>
<comment type="cofactor">
    <cofactor evidence="1">
        <name>Zn(2+)</name>
        <dbReference type="ChEBI" id="CHEBI:29105"/>
    </cofactor>
    <cofactor evidence="1">
        <name>Fe(3+)</name>
        <dbReference type="ChEBI" id="CHEBI:29034"/>
    </cofactor>
    <text evidence="1">Binds 1 zinc or iron ion per subunit.</text>
</comment>
<comment type="pathway">
    <text evidence="1">Amino-acid degradation; L-histidine degradation into L-glutamate; N-formimidoyl-L-glutamate from L-histidine: step 3/3.</text>
</comment>
<comment type="subcellular location">
    <subcellularLocation>
        <location evidence="1">Cytoplasm</location>
    </subcellularLocation>
</comment>
<comment type="similarity">
    <text evidence="1">Belongs to the metallo-dependent hydrolases superfamily. HutI family.</text>
</comment>
<accession>Q9KSQ1</accession>
<feature type="chain" id="PRO_0000160971" description="Imidazolonepropionase">
    <location>
        <begin position="1"/>
        <end position="402"/>
    </location>
</feature>
<feature type="binding site" evidence="1">
    <location>
        <position position="66"/>
    </location>
    <ligand>
        <name>Fe(3+)</name>
        <dbReference type="ChEBI" id="CHEBI:29034"/>
    </ligand>
</feature>
<feature type="binding site" evidence="1">
    <location>
        <position position="66"/>
    </location>
    <ligand>
        <name>Zn(2+)</name>
        <dbReference type="ChEBI" id="CHEBI:29105"/>
    </ligand>
</feature>
<feature type="binding site" evidence="1">
    <location>
        <position position="68"/>
    </location>
    <ligand>
        <name>Fe(3+)</name>
        <dbReference type="ChEBI" id="CHEBI:29034"/>
    </ligand>
</feature>
<feature type="binding site" evidence="1">
    <location>
        <position position="68"/>
    </location>
    <ligand>
        <name>Zn(2+)</name>
        <dbReference type="ChEBI" id="CHEBI:29105"/>
    </ligand>
</feature>
<feature type="binding site" evidence="1">
    <location>
        <position position="75"/>
    </location>
    <ligand>
        <name>4-imidazolone-5-propanoate</name>
        <dbReference type="ChEBI" id="CHEBI:77893"/>
    </ligand>
</feature>
<feature type="binding site" evidence="1">
    <location>
        <position position="138"/>
    </location>
    <ligand>
        <name>4-imidazolone-5-propanoate</name>
        <dbReference type="ChEBI" id="CHEBI:77893"/>
    </ligand>
</feature>
<feature type="binding site" evidence="1">
    <location>
        <position position="138"/>
    </location>
    <ligand>
        <name>N-formimidoyl-L-glutamate</name>
        <dbReference type="ChEBI" id="CHEBI:58928"/>
    </ligand>
</feature>
<feature type="binding site" evidence="1">
    <location>
        <position position="171"/>
    </location>
    <ligand>
        <name>4-imidazolone-5-propanoate</name>
        <dbReference type="ChEBI" id="CHEBI:77893"/>
    </ligand>
</feature>
<feature type="binding site" evidence="1">
    <location>
        <position position="236"/>
    </location>
    <ligand>
        <name>Fe(3+)</name>
        <dbReference type="ChEBI" id="CHEBI:29034"/>
    </ligand>
</feature>
<feature type="binding site" evidence="1">
    <location>
        <position position="236"/>
    </location>
    <ligand>
        <name>Zn(2+)</name>
        <dbReference type="ChEBI" id="CHEBI:29105"/>
    </ligand>
</feature>
<feature type="binding site" evidence="1">
    <location>
        <position position="239"/>
    </location>
    <ligand>
        <name>4-imidazolone-5-propanoate</name>
        <dbReference type="ChEBI" id="CHEBI:77893"/>
    </ligand>
</feature>
<feature type="binding site" evidence="1">
    <location>
        <position position="311"/>
    </location>
    <ligand>
        <name>Fe(3+)</name>
        <dbReference type="ChEBI" id="CHEBI:29034"/>
    </ligand>
</feature>
<feature type="binding site" evidence="1">
    <location>
        <position position="311"/>
    </location>
    <ligand>
        <name>Zn(2+)</name>
        <dbReference type="ChEBI" id="CHEBI:29105"/>
    </ligand>
</feature>
<feature type="binding site" evidence="1">
    <location>
        <position position="313"/>
    </location>
    <ligand>
        <name>N-formimidoyl-L-glutamate</name>
        <dbReference type="ChEBI" id="CHEBI:58928"/>
    </ligand>
</feature>
<feature type="binding site" evidence="1">
    <location>
        <position position="315"/>
    </location>
    <ligand>
        <name>N-formimidoyl-L-glutamate</name>
        <dbReference type="ChEBI" id="CHEBI:58928"/>
    </ligand>
</feature>
<feature type="binding site" evidence="1">
    <location>
        <position position="316"/>
    </location>
    <ligand>
        <name>4-imidazolone-5-propanoate</name>
        <dbReference type="ChEBI" id="CHEBI:77893"/>
    </ligand>
</feature>
<gene>
    <name evidence="1" type="primary">hutI</name>
    <name type="ordered locus">VC_1205</name>
</gene>
<organism>
    <name type="scientific">Vibrio cholerae serotype O1 (strain ATCC 39315 / El Tor Inaba N16961)</name>
    <dbReference type="NCBI Taxonomy" id="243277"/>
    <lineage>
        <taxon>Bacteria</taxon>
        <taxon>Pseudomonadati</taxon>
        <taxon>Pseudomonadota</taxon>
        <taxon>Gammaproteobacteria</taxon>
        <taxon>Vibrionales</taxon>
        <taxon>Vibrionaceae</taxon>
        <taxon>Vibrio</taxon>
    </lineage>
</organism>
<protein>
    <recommendedName>
        <fullName evidence="1">Imidazolonepropionase</fullName>
        <ecNumber evidence="1">3.5.2.7</ecNumber>
    </recommendedName>
    <alternativeName>
        <fullName evidence="1">Imidazolone-5-propionate hydrolase</fullName>
    </alternativeName>
</protein>
<reference key="1">
    <citation type="journal article" date="2000" name="Nature">
        <title>DNA sequence of both chromosomes of the cholera pathogen Vibrio cholerae.</title>
        <authorList>
            <person name="Heidelberg J.F."/>
            <person name="Eisen J.A."/>
            <person name="Nelson W.C."/>
            <person name="Clayton R.A."/>
            <person name="Gwinn M.L."/>
            <person name="Dodson R.J."/>
            <person name="Haft D.H."/>
            <person name="Hickey E.K."/>
            <person name="Peterson J.D."/>
            <person name="Umayam L.A."/>
            <person name="Gill S.R."/>
            <person name="Nelson K.E."/>
            <person name="Read T.D."/>
            <person name="Tettelin H."/>
            <person name="Richardson D.L."/>
            <person name="Ermolaeva M.D."/>
            <person name="Vamathevan J.J."/>
            <person name="Bass S."/>
            <person name="Qin H."/>
            <person name="Dragoi I."/>
            <person name="Sellers P."/>
            <person name="McDonald L.A."/>
            <person name="Utterback T.R."/>
            <person name="Fleischmann R.D."/>
            <person name="Nierman W.C."/>
            <person name="White O."/>
            <person name="Salzberg S.L."/>
            <person name="Smith H.O."/>
            <person name="Colwell R.R."/>
            <person name="Mekalanos J.J."/>
            <person name="Venter J.C."/>
            <person name="Fraser C.M."/>
        </authorList>
    </citation>
    <scope>NUCLEOTIDE SEQUENCE [LARGE SCALE GENOMIC DNA]</scope>
    <source>
        <strain>ATCC 39315 / El Tor Inaba N16961</strain>
    </source>
</reference>
<evidence type="ECO:0000255" key="1">
    <source>
        <dbReference type="HAMAP-Rule" id="MF_00372"/>
    </source>
</evidence>
<name>HUTI_VIBCH</name>
<dbReference type="EC" id="3.5.2.7" evidence="1"/>
<dbReference type="EMBL" id="AE003852">
    <property type="protein sequence ID" value="AAF94364.1"/>
    <property type="molecule type" value="Genomic_DNA"/>
</dbReference>
<dbReference type="PIR" id="H82228">
    <property type="entry name" value="H82228"/>
</dbReference>
<dbReference type="RefSeq" id="NP_230850.1">
    <property type="nucleotide sequence ID" value="NC_002505.1"/>
</dbReference>
<dbReference type="RefSeq" id="WP_000995897.1">
    <property type="nucleotide sequence ID" value="NZ_LT906614.1"/>
</dbReference>
<dbReference type="SMR" id="Q9KSQ1"/>
<dbReference type="STRING" id="243277.VC_1205"/>
<dbReference type="DNASU" id="2614638"/>
<dbReference type="EnsemblBacteria" id="AAF94364">
    <property type="protein sequence ID" value="AAF94364"/>
    <property type="gene ID" value="VC_1205"/>
</dbReference>
<dbReference type="KEGG" id="vch:VC_1205"/>
<dbReference type="PATRIC" id="fig|243277.26.peg.1152"/>
<dbReference type="eggNOG" id="COG1228">
    <property type="taxonomic scope" value="Bacteria"/>
</dbReference>
<dbReference type="HOGENOM" id="CLU_041647_0_0_6"/>
<dbReference type="UniPathway" id="UPA00379">
    <property type="reaction ID" value="UER00551"/>
</dbReference>
<dbReference type="Proteomes" id="UP000000584">
    <property type="component" value="Chromosome 1"/>
</dbReference>
<dbReference type="GO" id="GO:0005737">
    <property type="term" value="C:cytoplasm"/>
    <property type="evidence" value="ECO:0007669"/>
    <property type="project" value="UniProtKB-SubCell"/>
</dbReference>
<dbReference type="GO" id="GO:0050480">
    <property type="term" value="F:imidazolonepropionase activity"/>
    <property type="evidence" value="ECO:0000318"/>
    <property type="project" value="GO_Central"/>
</dbReference>
<dbReference type="GO" id="GO:0005506">
    <property type="term" value="F:iron ion binding"/>
    <property type="evidence" value="ECO:0007669"/>
    <property type="project" value="UniProtKB-UniRule"/>
</dbReference>
<dbReference type="GO" id="GO:0008270">
    <property type="term" value="F:zinc ion binding"/>
    <property type="evidence" value="ECO:0007669"/>
    <property type="project" value="UniProtKB-UniRule"/>
</dbReference>
<dbReference type="GO" id="GO:0006548">
    <property type="term" value="P:L-histidine catabolic process"/>
    <property type="evidence" value="ECO:0000318"/>
    <property type="project" value="GO_Central"/>
</dbReference>
<dbReference type="GO" id="GO:0019556">
    <property type="term" value="P:L-histidine catabolic process to glutamate and formamide"/>
    <property type="evidence" value="ECO:0007669"/>
    <property type="project" value="UniProtKB-UniPathway"/>
</dbReference>
<dbReference type="GO" id="GO:0019557">
    <property type="term" value="P:L-histidine catabolic process to glutamate and formate"/>
    <property type="evidence" value="ECO:0007669"/>
    <property type="project" value="UniProtKB-UniPathway"/>
</dbReference>
<dbReference type="CDD" id="cd01296">
    <property type="entry name" value="Imidazolone-5PH"/>
    <property type="match status" value="1"/>
</dbReference>
<dbReference type="FunFam" id="3.20.20.140:FF:000007">
    <property type="entry name" value="Imidazolonepropionase"/>
    <property type="match status" value="1"/>
</dbReference>
<dbReference type="Gene3D" id="3.20.20.140">
    <property type="entry name" value="Metal-dependent hydrolases"/>
    <property type="match status" value="1"/>
</dbReference>
<dbReference type="Gene3D" id="2.30.40.10">
    <property type="entry name" value="Urease, subunit C, domain 1"/>
    <property type="match status" value="1"/>
</dbReference>
<dbReference type="HAMAP" id="MF_00372">
    <property type="entry name" value="HutI"/>
    <property type="match status" value="1"/>
</dbReference>
<dbReference type="InterPro" id="IPR006680">
    <property type="entry name" value="Amidohydro-rel"/>
</dbReference>
<dbReference type="InterPro" id="IPR005920">
    <property type="entry name" value="HutI"/>
</dbReference>
<dbReference type="InterPro" id="IPR011059">
    <property type="entry name" value="Metal-dep_hydrolase_composite"/>
</dbReference>
<dbReference type="InterPro" id="IPR032466">
    <property type="entry name" value="Metal_Hydrolase"/>
</dbReference>
<dbReference type="NCBIfam" id="TIGR01224">
    <property type="entry name" value="hutI"/>
    <property type="match status" value="1"/>
</dbReference>
<dbReference type="PANTHER" id="PTHR42752">
    <property type="entry name" value="IMIDAZOLONEPROPIONASE"/>
    <property type="match status" value="1"/>
</dbReference>
<dbReference type="PANTHER" id="PTHR42752:SF1">
    <property type="entry name" value="IMIDAZOLONEPROPIONASE-RELATED"/>
    <property type="match status" value="1"/>
</dbReference>
<dbReference type="Pfam" id="PF01979">
    <property type="entry name" value="Amidohydro_1"/>
    <property type="match status" value="1"/>
</dbReference>
<dbReference type="SUPFAM" id="SSF51338">
    <property type="entry name" value="Composite domain of metallo-dependent hydrolases"/>
    <property type="match status" value="1"/>
</dbReference>
<dbReference type="SUPFAM" id="SSF51556">
    <property type="entry name" value="Metallo-dependent hydrolases"/>
    <property type="match status" value="1"/>
</dbReference>